<comment type="function">
    <text evidence="1 3">Required for mannose-6-phosphate-dependent trafficking of lysosomal enzymes (PubMed:36096887). LYSET bridges GlcNAc-1-phosphate transferase (GNPTAB), to the membrane-bound transcription factor site-1 protease (MBTPS1), thus allowing proteolytic activation of the GNPTAB. GNPTAB is involved in the regulation of M6P-dependent Golgi-to-lysosome trafficking of lysosomal enzymes. LYSET is thus an essential factor for maturation and delivery of lysosomal hydrolases (By similarity).</text>
</comment>
<comment type="subcellular location">
    <subcellularLocation>
        <location evidence="1">Golgi apparatus membrane</location>
        <topology evidence="2">Multi-pass membrane protein</topology>
    </subcellularLocation>
</comment>
<comment type="disruption phenotype">
    <text evidence="3">Knockout leads to severe developmental defects in zebrafish embryos, including heart edema, insufficient cartilage, and skeletal dysplasia.</text>
</comment>
<comment type="similarity">
    <text evidence="4">Belongs to the LYSET family.</text>
</comment>
<comment type="sequence caution" evidence="4">
    <conflict type="erroneous initiation">
        <sequence resource="EMBL-CDS" id="AAH96869"/>
    </conflict>
    <text>Truncated N-terminus.</text>
</comment>
<organism>
    <name type="scientific">Danio rerio</name>
    <name type="common">Zebrafish</name>
    <name type="synonym">Brachydanio rerio</name>
    <dbReference type="NCBI Taxonomy" id="7955"/>
    <lineage>
        <taxon>Eukaryota</taxon>
        <taxon>Metazoa</taxon>
        <taxon>Chordata</taxon>
        <taxon>Craniata</taxon>
        <taxon>Vertebrata</taxon>
        <taxon>Euteleostomi</taxon>
        <taxon>Actinopterygii</taxon>
        <taxon>Neopterygii</taxon>
        <taxon>Teleostei</taxon>
        <taxon>Ostariophysi</taxon>
        <taxon>Cypriniformes</taxon>
        <taxon>Danionidae</taxon>
        <taxon>Danioninae</taxon>
        <taxon>Danio</taxon>
    </lineage>
</organism>
<dbReference type="EMBL" id="BX284625">
    <property type="protein sequence ID" value="CAH69134.1"/>
    <property type="molecule type" value="Genomic_DNA"/>
</dbReference>
<dbReference type="EMBL" id="BC096869">
    <property type="protein sequence ID" value="AAH96869.1"/>
    <property type="status" value="ALT_INIT"/>
    <property type="molecule type" value="mRNA"/>
</dbReference>
<dbReference type="RefSeq" id="NP_001028918.2">
    <property type="nucleotide sequence ID" value="NM_001033746.2"/>
</dbReference>
<dbReference type="SMR" id="Q5TZA3"/>
<dbReference type="FunCoup" id="Q5TZA3">
    <property type="interactions" value="1562"/>
</dbReference>
<dbReference type="STRING" id="7955.ENSDARP00000062093"/>
<dbReference type="PaxDb" id="7955-ENSDARP00000062093"/>
<dbReference type="Ensembl" id="ENSDART00000062094">
    <property type="protein sequence ID" value="ENSDARP00000062093"/>
    <property type="gene ID" value="ENSDARG00000042341"/>
</dbReference>
<dbReference type="GeneID" id="619265"/>
<dbReference type="KEGG" id="dre:619265"/>
<dbReference type="AGR" id="ZFIN:ZDB-GENE-041001-121"/>
<dbReference type="CTD" id="619265"/>
<dbReference type="ZFIN" id="ZDB-GENE-041001-121">
    <property type="gene designation" value="tmem251"/>
</dbReference>
<dbReference type="eggNOG" id="ENOG502RY2J">
    <property type="taxonomic scope" value="Eukaryota"/>
</dbReference>
<dbReference type="HOGENOM" id="CLU_133007_0_0_1"/>
<dbReference type="InParanoid" id="Q5TZA3"/>
<dbReference type="OMA" id="AYYIFEV"/>
<dbReference type="OrthoDB" id="6273523at2759"/>
<dbReference type="PhylomeDB" id="Q5TZA3"/>
<dbReference type="TreeFam" id="TF332722"/>
<dbReference type="PRO" id="PR:Q5TZA3"/>
<dbReference type="Proteomes" id="UP000000437">
    <property type="component" value="Chromosome 20"/>
</dbReference>
<dbReference type="Bgee" id="ENSDARG00000042341">
    <property type="expression patterns" value="Expressed in mature ovarian follicle and 23 other cell types or tissues"/>
</dbReference>
<dbReference type="GO" id="GO:0005794">
    <property type="term" value="C:Golgi apparatus"/>
    <property type="evidence" value="ECO:0000250"/>
    <property type="project" value="UniProtKB"/>
</dbReference>
<dbReference type="GO" id="GO:0000139">
    <property type="term" value="C:Golgi membrane"/>
    <property type="evidence" value="ECO:0007669"/>
    <property type="project" value="UniProtKB-SubCell"/>
</dbReference>
<dbReference type="GO" id="GO:0007040">
    <property type="term" value="P:lysosome organization"/>
    <property type="evidence" value="ECO:0000250"/>
    <property type="project" value="UniProtKB"/>
</dbReference>
<dbReference type="GO" id="GO:0060627">
    <property type="term" value="P:regulation of vesicle-mediated transport"/>
    <property type="evidence" value="ECO:0000250"/>
    <property type="project" value="UniProtKB"/>
</dbReference>
<dbReference type="InterPro" id="IPR028024">
    <property type="entry name" value="LYSET"/>
</dbReference>
<dbReference type="PANTHER" id="PTHR31925:SF1">
    <property type="entry name" value="LYSOSOMAL ENZYME TRAFFICKING FACTOR"/>
    <property type="match status" value="1"/>
</dbReference>
<dbReference type="PANTHER" id="PTHR31925">
    <property type="entry name" value="TRANSMEMBRANE PROTEIN 251"/>
    <property type="match status" value="1"/>
</dbReference>
<dbReference type="Pfam" id="PF15190">
    <property type="entry name" value="TMEM251"/>
    <property type="match status" value="1"/>
</dbReference>
<keyword id="KW-0333">Golgi apparatus</keyword>
<keyword id="KW-0472">Membrane</keyword>
<keyword id="KW-1185">Reference proteome</keyword>
<keyword id="KW-0812">Transmembrane</keyword>
<keyword id="KW-1133">Transmembrane helix</keyword>
<name>LYSET_DANRE</name>
<proteinExistence type="evidence at transcript level"/>
<accession>Q5TZA3</accession>
<accession>Q4V9J4</accession>
<protein>
    <recommendedName>
        <fullName>Lysosomal enzyme trafficking factor</fullName>
    </recommendedName>
    <alternativeName>
        <fullName>Transmembrane protein 251</fullName>
    </alternativeName>
</protein>
<sequence length="142" mass="16080">MMNFRQRMGWIGVGLYLLASVAAVYYIFEISQTYNRLALAQVEKTSGAQAKWPGDASSSSPSSTSWIVTLKTRLLLLPFWVWATIFLLPYLQVFLFLYSCTRADPKTVGYCILPICLAVLCNRHQTFTKASNQISRLQLIDT</sequence>
<feature type="chain" id="PRO_0000359885" description="Lysosomal enzyme trafficking factor">
    <location>
        <begin position="1"/>
        <end position="142"/>
    </location>
</feature>
<feature type="transmembrane region" description="Helical" evidence="2">
    <location>
        <begin position="8"/>
        <end position="28"/>
    </location>
</feature>
<feature type="transmembrane region" description="Helical" evidence="2">
    <location>
        <begin position="76"/>
        <end position="96"/>
    </location>
</feature>
<feature type="sequence conflict" description="In Ref. 2; AAH96869." evidence="4" ref="2">
    <original>C</original>
    <variation>R</variation>
    <location>
        <position position="100"/>
    </location>
</feature>
<evidence type="ECO:0000250" key="1">
    <source>
        <dbReference type="UniProtKB" id="Q8N6I4"/>
    </source>
</evidence>
<evidence type="ECO:0000255" key="2"/>
<evidence type="ECO:0000269" key="3">
    <source>
    </source>
</evidence>
<evidence type="ECO:0000305" key="4"/>
<gene>
    <name type="primary">tmem251</name>
    <name type="synonym">C14orf109</name>
    <name type="ORF">si:dkeyp-55f12.4</name>
    <name type="ORF">zgc:112233</name>
</gene>
<reference key="1">
    <citation type="journal article" date="2013" name="Nature">
        <title>The zebrafish reference genome sequence and its relationship to the human genome.</title>
        <authorList>
            <person name="Howe K."/>
            <person name="Clark M.D."/>
            <person name="Torroja C.F."/>
            <person name="Torrance J."/>
            <person name="Berthelot C."/>
            <person name="Muffato M."/>
            <person name="Collins J.E."/>
            <person name="Humphray S."/>
            <person name="McLaren K."/>
            <person name="Matthews L."/>
            <person name="McLaren S."/>
            <person name="Sealy I."/>
            <person name="Caccamo M."/>
            <person name="Churcher C."/>
            <person name="Scott C."/>
            <person name="Barrett J.C."/>
            <person name="Koch R."/>
            <person name="Rauch G.J."/>
            <person name="White S."/>
            <person name="Chow W."/>
            <person name="Kilian B."/>
            <person name="Quintais L.T."/>
            <person name="Guerra-Assuncao J.A."/>
            <person name="Zhou Y."/>
            <person name="Gu Y."/>
            <person name="Yen J."/>
            <person name="Vogel J.H."/>
            <person name="Eyre T."/>
            <person name="Redmond S."/>
            <person name="Banerjee R."/>
            <person name="Chi J."/>
            <person name="Fu B."/>
            <person name="Langley E."/>
            <person name="Maguire S.F."/>
            <person name="Laird G.K."/>
            <person name="Lloyd D."/>
            <person name="Kenyon E."/>
            <person name="Donaldson S."/>
            <person name="Sehra H."/>
            <person name="Almeida-King J."/>
            <person name="Loveland J."/>
            <person name="Trevanion S."/>
            <person name="Jones M."/>
            <person name="Quail M."/>
            <person name="Willey D."/>
            <person name="Hunt A."/>
            <person name="Burton J."/>
            <person name="Sims S."/>
            <person name="McLay K."/>
            <person name="Plumb B."/>
            <person name="Davis J."/>
            <person name="Clee C."/>
            <person name="Oliver K."/>
            <person name="Clark R."/>
            <person name="Riddle C."/>
            <person name="Elliot D."/>
            <person name="Threadgold G."/>
            <person name="Harden G."/>
            <person name="Ware D."/>
            <person name="Begum S."/>
            <person name="Mortimore B."/>
            <person name="Kerry G."/>
            <person name="Heath P."/>
            <person name="Phillimore B."/>
            <person name="Tracey A."/>
            <person name="Corby N."/>
            <person name="Dunn M."/>
            <person name="Johnson C."/>
            <person name="Wood J."/>
            <person name="Clark S."/>
            <person name="Pelan S."/>
            <person name="Griffiths G."/>
            <person name="Smith M."/>
            <person name="Glithero R."/>
            <person name="Howden P."/>
            <person name="Barker N."/>
            <person name="Lloyd C."/>
            <person name="Stevens C."/>
            <person name="Harley J."/>
            <person name="Holt K."/>
            <person name="Panagiotidis G."/>
            <person name="Lovell J."/>
            <person name="Beasley H."/>
            <person name="Henderson C."/>
            <person name="Gordon D."/>
            <person name="Auger K."/>
            <person name="Wright D."/>
            <person name="Collins J."/>
            <person name="Raisen C."/>
            <person name="Dyer L."/>
            <person name="Leung K."/>
            <person name="Robertson L."/>
            <person name="Ambridge K."/>
            <person name="Leongamornlert D."/>
            <person name="McGuire S."/>
            <person name="Gilderthorp R."/>
            <person name="Griffiths C."/>
            <person name="Manthravadi D."/>
            <person name="Nichol S."/>
            <person name="Barker G."/>
            <person name="Whitehead S."/>
            <person name="Kay M."/>
            <person name="Brown J."/>
            <person name="Murnane C."/>
            <person name="Gray E."/>
            <person name="Humphries M."/>
            <person name="Sycamore N."/>
            <person name="Barker D."/>
            <person name="Saunders D."/>
            <person name="Wallis J."/>
            <person name="Babbage A."/>
            <person name="Hammond S."/>
            <person name="Mashreghi-Mohammadi M."/>
            <person name="Barr L."/>
            <person name="Martin S."/>
            <person name="Wray P."/>
            <person name="Ellington A."/>
            <person name="Matthews N."/>
            <person name="Ellwood M."/>
            <person name="Woodmansey R."/>
            <person name="Clark G."/>
            <person name="Cooper J."/>
            <person name="Tromans A."/>
            <person name="Grafham D."/>
            <person name="Skuce C."/>
            <person name="Pandian R."/>
            <person name="Andrews R."/>
            <person name="Harrison E."/>
            <person name="Kimberley A."/>
            <person name="Garnett J."/>
            <person name="Fosker N."/>
            <person name="Hall R."/>
            <person name="Garner P."/>
            <person name="Kelly D."/>
            <person name="Bird C."/>
            <person name="Palmer S."/>
            <person name="Gehring I."/>
            <person name="Berger A."/>
            <person name="Dooley C.M."/>
            <person name="Ersan-Urun Z."/>
            <person name="Eser C."/>
            <person name="Geiger H."/>
            <person name="Geisler M."/>
            <person name="Karotki L."/>
            <person name="Kirn A."/>
            <person name="Konantz J."/>
            <person name="Konantz M."/>
            <person name="Oberlander M."/>
            <person name="Rudolph-Geiger S."/>
            <person name="Teucke M."/>
            <person name="Lanz C."/>
            <person name="Raddatz G."/>
            <person name="Osoegawa K."/>
            <person name="Zhu B."/>
            <person name="Rapp A."/>
            <person name="Widaa S."/>
            <person name="Langford C."/>
            <person name="Yang F."/>
            <person name="Schuster S.C."/>
            <person name="Carter N.P."/>
            <person name="Harrow J."/>
            <person name="Ning Z."/>
            <person name="Herrero J."/>
            <person name="Searle S.M."/>
            <person name="Enright A."/>
            <person name="Geisler R."/>
            <person name="Plasterk R.H."/>
            <person name="Lee C."/>
            <person name="Westerfield M."/>
            <person name="de Jong P.J."/>
            <person name="Zon L.I."/>
            <person name="Postlethwait J.H."/>
            <person name="Nusslein-Volhard C."/>
            <person name="Hubbard T.J."/>
            <person name="Roest Crollius H."/>
            <person name="Rogers J."/>
            <person name="Stemple D.L."/>
        </authorList>
    </citation>
    <scope>NUCLEOTIDE SEQUENCE [LARGE SCALE GENOMIC DNA]</scope>
    <source>
        <strain>Tuebingen</strain>
    </source>
</reference>
<reference key="2">
    <citation type="submission" date="2005-06" db="EMBL/GenBank/DDBJ databases">
        <authorList>
            <consortium name="NIH - Zebrafish Gene Collection (ZGC) project"/>
        </authorList>
    </citation>
    <scope>NUCLEOTIDE SEQUENCE [LARGE SCALE MRNA]</scope>
    <source>
        <tissue>Intestine</tissue>
    </source>
</reference>
<reference key="3">
    <citation type="journal article" date="2022" name="Nat. Commun.">
        <title>GCAF(TMEM251) regulates lysosome biogenesis by activating the mannose-6-phosphate pathway.</title>
        <authorList>
            <person name="Zhang W."/>
            <person name="Yang X."/>
            <person name="Li Y."/>
            <person name="Yu L."/>
            <person name="Zhang B."/>
            <person name="Zhang J."/>
            <person name="Cho W.J."/>
            <person name="Venkatarangan V."/>
            <person name="Chen L."/>
            <person name="Burugula B.B."/>
            <person name="Bui S."/>
            <person name="Wang Y."/>
            <person name="Duan C."/>
            <person name="Kitzman J.O."/>
            <person name="Li M."/>
        </authorList>
    </citation>
    <scope>DISRUPTION PHENOTYPE</scope>
    <scope>FUNCTION</scope>
</reference>